<name>POMP_PONAB</name>
<sequence>MNARGLGSELKDSIPVTELSASGPFESHDLLRKGFSCVKNELLPSHPLELSEKNFQLNQDKMNFSTLRNIQGLFAPLKLQMEFKAVQQVQRLPFLSSSNLSLDVLRGNDETIGFEDILNDPSQSEVMGEPHLMVEYKLGLL</sequence>
<feature type="chain" id="PRO_0000247186" description="Proteasome maturation protein">
    <location>
        <begin position="1"/>
        <end position="141"/>
    </location>
</feature>
<feature type="cross-link" description="Glycyl lysine isopeptide (Lys-Gly) (interchain with G-Cter in SUMO2)" evidence="2">
    <location>
        <position position="39"/>
    </location>
</feature>
<reference key="1">
    <citation type="submission" date="2004-11" db="EMBL/GenBank/DDBJ databases">
        <authorList>
            <consortium name="The German cDNA consortium"/>
        </authorList>
    </citation>
    <scope>NUCLEOTIDE SEQUENCE [LARGE SCALE MRNA]</scope>
    <source>
        <tissue>Heart</tissue>
    </source>
</reference>
<dbReference type="EMBL" id="CR859368">
    <property type="protein sequence ID" value="CAH91541.1"/>
    <property type="molecule type" value="mRNA"/>
</dbReference>
<dbReference type="RefSeq" id="NP_001125906.1">
    <property type="nucleotide sequence ID" value="NM_001132434.2"/>
</dbReference>
<dbReference type="SMR" id="Q5R9L9"/>
<dbReference type="FunCoup" id="Q5R9L9">
    <property type="interactions" value="2859"/>
</dbReference>
<dbReference type="STRING" id="9601.ENSPPYP00000005974"/>
<dbReference type="Ensembl" id="ENSPPYT00000006209.3">
    <property type="protein sequence ID" value="ENSPPYP00000005974.3"/>
    <property type="gene ID" value="ENSPPYG00000005247.3"/>
</dbReference>
<dbReference type="GeneID" id="100172839"/>
<dbReference type="KEGG" id="pon:100172839"/>
<dbReference type="CTD" id="51371"/>
<dbReference type="eggNOG" id="KOG3061">
    <property type="taxonomic scope" value="Eukaryota"/>
</dbReference>
<dbReference type="GeneTree" id="ENSGT00390000010734"/>
<dbReference type="HOGENOM" id="CLU_100687_3_0_1"/>
<dbReference type="InParanoid" id="Q5R9L9"/>
<dbReference type="OMA" id="HADMEKK"/>
<dbReference type="OrthoDB" id="15001at2759"/>
<dbReference type="Proteomes" id="UP000001595">
    <property type="component" value="Chromosome 13"/>
</dbReference>
<dbReference type="GO" id="GO:0005829">
    <property type="term" value="C:cytosol"/>
    <property type="evidence" value="ECO:0007669"/>
    <property type="project" value="UniProtKB-SubCell"/>
</dbReference>
<dbReference type="GO" id="GO:0005783">
    <property type="term" value="C:endoplasmic reticulum"/>
    <property type="evidence" value="ECO:0007669"/>
    <property type="project" value="UniProtKB-KW"/>
</dbReference>
<dbReference type="GO" id="GO:0016020">
    <property type="term" value="C:membrane"/>
    <property type="evidence" value="ECO:0007669"/>
    <property type="project" value="UniProtKB-KW"/>
</dbReference>
<dbReference type="GO" id="GO:0016607">
    <property type="term" value="C:nuclear speck"/>
    <property type="evidence" value="ECO:0007669"/>
    <property type="project" value="Ensembl"/>
</dbReference>
<dbReference type="GO" id="GO:0043248">
    <property type="term" value="P:proteasome assembly"/>
    <property type="evidence" value="ECO:0007669"/>
    <property type="project" value="Ensembl"/>
</dbReference>
<dbReference type="InterPro" id="IPR008012">
    <property type="entry name" value="Ump1"/>
</dbReference>
<dbReference type="PANTHER" id="PTHR12828:SF3">
    <property type="entry name" value="PROTEASOME MATURATION PROTEIN"/>
    <property type="match status" value="1"/>
</dbReference>
<dbReference type="PANTHER" id="PTHR12828">
    <property type="entry name" value="PROTEASOME MATURATION PROTEIN UMP1"/>
    <property type="match status" value="1"/>
</dbReference>
<dbReference type="Pfam" id="PF05348">
    <property type="entry name" value="UMP1"/>
    <property type="match status" value="1"/>
</dbReference>
<keyword id="KW-0143">Chaperone</keyword>
<keyword id="KW-0963">Cytoplasm</keyword>
<keyword id="KW-0256">Endoplasmic reticulum</keyword>
<keyword id="KW-1017">Isopeptide bond</keyword>
<keyword id="KW-0472">Membrane</keyword>
<keyword id="KW-0492">Microsome</keyword>
<keyword id="KW-0539">Nucleus</keyword>
<keyword id="KW-1185">Reference proteome</keyword>
<keyword id="KW-0832">Ubl conjugation</keyword>
<evidence type="ECO:0000250" key="1"/>
<evidence type="ECO:0000250" key="2">
    <source>
        <dbReference type="UniProtKB" id="Q9Y244"/>
    </source>
</evidence>
<evidence type="ECO:0000305" key="3"/>
<proteinExistence type="evidence at transcript level"/>
<gene>
    <name type="primary">POMP</name>
</gene>
<accession>Q5R9L9</accession>
<protein>
    <recommendedName>
        <fullName>Proteasome maturation protein</fullName>
    </recommendedName>
    <alternativeName>
        <fullName>Proteassemblin</fullName>
    </alternativeName>
</protein>
<organism>
    <name type="scientific">Pongo abelii</name>
    <name type="common">Sumatran orangutan</name>
    <name type="synonym">Pongo pygmaeus abelii</name>
    <dbReference type="NCBI Taxonomy" id="9601"/>
    <lineage>
        <taxon>Eukaryota</taxon>
        <taxon>Metazoa</taxon>
        <taxon>Chordata</taxon>
        <taxon>Craniata</taxon>
        <taxon>Vertebrata</taxon>
        <taxon>Euteleostomi</taxon>
        <taxon>Mammalia</taxon>
        <taxon>Eutheria</taxon>
        <taxon>Euarchontoglires</taxon>
        <taxon>Primates</taxon>
        <taxon>Haplorrhini</taxon>
        <taxon>Catarrhini</taxon>
        <taxon>Hominidae</taxon>
        <taxon>Pongo</taxon>
    </lineage>
</organism>
<comment type="function">
    <text evidence="1">Molecular chaperone essential for the assembly of standard proteasomes and immunoproteasomes. Degraded after completion of proteasome maturation (By similarity). Mediates the association of 20S preproteasome with the endoplasmic reticulum (By similarity).</text>
</comment>
<comment type="subunit">
    <text evidence="1">Constituent of preproteasomes, but not of mature 20S proteasomes. Within the preproteasome, may directly interact with PSMB1/beta6, PSMB4/beta7, PSMB5/beta5, PSMB6/beta1 and PSMB9/beta1i. Interaction with PSMB8/beta5i is controversial. Forms tetramers (By similarity).</text>
</comment>
<comment type="subcellular location">
    <subcellularLocation>
        <location evidence="1">Cytoplasm</location>
        <location evidence="1">Cytosol</location>
    </subcellularLocation>
    <subcellularLocation>
        <location evidence="1">Nucleus</location>
    </subcellularLocation>
    <subcellularLocation>
        <location evidence="1">Microsome membrane</location>
    </subcellularLocation>
</comment>
<comment type="similarity">
    <text evidence="3">Belongs to the POMP/UMP1 family.</text>
</comment>